<protein>
    <recommendedName>
        <fullName evidence="1">3-phosphoshikimate 1-carboxyvinyltransferase</fullName>
        <ecNumber evidence="1">2.5.1.19</ecNumber>
    </recommendedName>
    <alternativeName>
        <fullName evidence="1">5-enolpyruvylshikimate-3-phosphate synthase</fullName>
        <shortName evidence="1">EPSP synthase</shortName>
        <shortName evidence="1">EPSPS</shortName>
    </alternativeName>
</protein>
<gene>
    <name evidence="1" type="primary">aroA</name>
    <name type="ordered locus">RoseRS_3657</name>
</gene>
<keyword id="KW-0028">Amino-acid biosynthesis</keyword>
<keyword id="KW-0057">Aromatic amino acid biosynthesis</keyword>
<keyword id="KW-0963">Cytoplasm</keyword>
<keyword id="KW-0808">Transferase</keyword>
<dbReference type="EC" id="2.5.1.19" evidence="1"/>
<dbReference type="EMBL" id="CP000686">
    <property type="protein sequence ID" value="ABQ92012.1"/>
    <property type="molecule type" value="Genomic_DNA"/>
</dbReference>
<dbReference type="RefSeq" id="WP_011958354.1">
    <property type="nucleotide sequence ID" value="NC_009523.1"/>
</dbReference>
<dbReference type="SMR" id="A5UZF9"/>
<dbReference type="STRING" id="357808.RoseRS_3657"/>
<dbReference type="KEGG" id="rrs:RoseRS_3657"/>
<dbReference type="eggNOG" id="COG0128">
    <property type="taxonomic scope" value="Bacteria"/>
</dbReference>
<dbReference type="HOGENOM" id="CLU_024321_0_1_0"/>
<dbReference type="OrthoDB" id="9809920at2"/>
<dbReference type="UniPathway" id="UPA00053">
    <property type="reaction ID" value="UER00089"/>
</dbReference>
<dbReference type="Proteomes" id="UP000006554">
    <property type="component" value="Chromosome"/>
</dbReference>
<dbReference type="GO" id="GO:0005737">
    <property type="term" value="C:cytoplasm"/>
    <property type="evidence" value="ECO:0007669"/>
    <property type="project" value="UniProtKB-SubCell"/>
</dbReference>
<dbReference type="GO" id="GO:0003866">
    <property type="term" value="F:3-phosphoshikimate 1-carboxyvinyltransferase activity"/>
    <property type="evidence" value="ECO:0007669"/>
    <property type="project" value="UniProtKB-UniRule"/>
</dbReference>
<dbReference type="GO" id="GO:0008652">
    <property type="term" value="P:amino acid biosynthetic process"/>
    <property type="evidence" value="ECO:0007669"/>
    <property type="project" value="UniProtKB-KW"/>
</dbReference>
<dbReference type="GO" id="GO:0009073">
    <property type="term" value="P:aromatic amino acid family biosynthetic process"/>
    <property type="evidence" value="ECO:0007669"/>
    <property type="project" value="UniProtKB-KW"/>
</dbReference>
<dbReference type="GO" id="GO:0009423">
    <property type="term" value="P:chorismate biosynthetic process"/>
    <property type="evidence" value="ECO:0007669"/>
    <property type="project" value="UniProtKB-UniRule"/>
</dbReference>
<dbReference type="CDD" id="cd01556">
    <property type="entry name" value="EPSP_synthase"/>
    <property type="match status" value="1"/>
</dbReference>
<dbReference type="FunFam" id="3.65.10.10:FF:000005">
    <property type="entry name" value="3-phosphoshikimate 1-carboxyvinyltransferase"/>
    <property type="match status" value="1"/>
</dbReference>
<dbReference type="FunFam" id="3.65.10.10:FF:000006">
    <property type="entry name" value="3-phosphoshikimate 1-carboxyvinyltransferase"/>
    <property type="match status" value="1"/>
</dbReference>
<dbReference type="Gene3D" id="3.65.10.10">
    <property type="entry name" value="Enolpyruvate transferase domain"/>
    <property type="match status" value="2"/>
</dbReference>
<dbReference type="HAMAP" id="MF_00210">
    <property type="entry name" value="EPSP_synth"/>
    <property type="match status" value="1"/>
</dbReference>
<dbReference type="InterPro" id="IPR001986">
    <property type="entry name" value="Enolpyruvate_Tfrase_dom"/>
</dbReference>
<dbReference type="InterPro" id="IPR036968">
    <property type="entry name" value="Enolpyruvate_Tfrase_sf"/>
</dbReference>
<dbReference type="InterPro" id="IPR006264">
    <property type="entry name" value="EPSP_synthase"/>
</dbReference>
<dbReference type="InterPro" id="IPR023193">
    <property type="entry name" value="EPSP_synthase_CS"/>
</dbReference>
<dbReference type="InterPro" id="IPR013792">
    <property type="entry name" value="RNA3'P_cycl/enolpyr_Trfase_a/b"/>
</dbReference>
<dbReference type="NCBIfam" id="TIGR01356">
    <property type="entry name" value="aroA"/>
    <property type="match status" value="1"/>
</dbReference>
<dbReference type="PANTHER" id="PTHR21090">
    <property type="entry name" value="AROM/DEHYDROQUINATE SYNTHASE"/>
    <property type="match status" value="1"/>
</dbReference>
<dbReference type="PANTHER" id="PTHR21090:SF5">
    <property type="entry name" value="PENTAFUNCTIONAL AROM POLYPEPTIDE"/>
    <property type="match status" value="1"/>
</dbReference>
<dbReference type="Pfam" id="PF00275">
    <property type="entry name" value="EPSP_synthase"/>
    <property type="match status" value="1"/>
</dbReference>
<dbReference type="PIRSF" id="PIRSF000505">
    <property type="entry name" value="EPSPS"/>
    <property type="match status" value="1"/>
</dbReference>
<dbReference type="SUPFAM" id="SSF55205">
    <property type="entry name" value="EPT/RTPC-like"/>
    <property type="match status" value="1"/>
</dbReference>
<dbReference type="PROSITE" id="PS00104">
    <property type="entry name" value="EPSP_SYNTHASE_1"/>
    <property type="match status" value="1"/>
</dbReference>
<reference key="1">
    <citation type="submission" date="2007-04" db="EMBL/GenBank/DDBJ databases">
        <title>Complete sequence of Roseiflexus sp. RS-1.</title>
        <authorList>
            <consortium name="US DOE Joint Genome Institute"/>
            <person name="Copeland A."/>
            <person name="Lucas S."/>
            <person name="Lapidus A."/>
            <person name="Barry K."/>
            <person name="Detter J.C."/>
            <person name="Glavina del Rio T."/>
            <person name="Hammon N."/>
            <person name="Israni S."/>
            <person name="Dalin E."/>
            <person name="Tice H."/>
            <person name="Pitluck S."/>
            <person name="Chertkov O."/>
            <person name="Brettin T."/>
            <person name="Bruce D."/>
            <person name="Han C."/>
            <person name="Schmutz J."/>
            <person name="Larimer F."/>
            <person name="Land M."/>
            <person name="Hauser L."/>
            <person name="Kyrpides N."/>
            <person name="Mikhailova N."/>
            <person name="Bryant D.A."/>
            <person name="Richardson P."/>
        </authorList>
    </citation>
    <scope>NUCLEOTIDE SEQUENCE [LARGE SCALE GENOMIC DNA]</scope>
    <source>
        <strain>RS-1</strain>
    </source>
</reference>
<evidence type="ECO:0000255" key="1">
    <source>
        <dbReference type="HAMAP-Rule" id="MF_00210"/>
    </source>
</evidence>
<comment type="function">
    <text evidence="1">Catalyzes the transfer of the enolpyruvyl moiety of phosphoenolpyruvate (PEP) to the 5-hydroxyl of shikimate-3-phosphate (S3P) to produce enolpyruvyl shikimate-3-phosphate and inorganic phosphate.</text>
</comment>
<comment type="catalytic activity">
    <reaction evidence="1">
        <text>3-phosphoshikimate + phosphoenolpyruvate = 5-O-(1-carboxyvinyl)-3-phosphoshikimate + phosphate</text>
        <dbReference type="Rhea" id="RHEA:21256"/>
        <dbReference type="ChEBI" id="CHEBI:43474"/>
        <dbReference type="ChEBI" id="CHEBI:57701"/>
        <dbReference type="ChEBI" id="CHEBI:58702"/>
        <dbReference type="ChEBI" id="CHEBI:145989"/>
        <dbReference type="EC" id="2.5.1.19"/>
    </reaction>
    <physiologicalReaction direction="left-to-right" evidence="1">
        <dbReference type="Rhea" id="RHEA:21257"/>
    </physiologicalReaction>
</comment>
<comment type="pathway">
    <text evidence="1">Metabolic intermediate biosynthesis; chorismate biosynthesis; chorismate from D-erythrose 4-phosphate and phosphoenolpyruvate: step 6/7.</text>
</comment>
<comment type="subunit">
    <text evidence="1">Monomer.</text>
</comment>
<comment type="subcellular location">
    <subcellularLocation>
        <location evidence="1">Cytoplasm</location>
    </subcellularLocation>
</comment>
<comment type="similarity">
    <text evidence="1">Belongs to the EPSP synthase family.</text>
</comment>
<organism>
    <name type="scientific">Roseiflexus sp. (strain RS-1)</name>
    <dbReference type="NCBI Taxonomy" id="357808"/>
    <lineage>
        <taxon>Bacteria</taxon>
        <taxon>Bacillati</taxon>
        <taxon>Chloroflexota</taxon>
        <taxon>Chloroflexia</taxon>
        <taxon>Chloroflexales</taxon>
        <taxon>Roseiflexineae</taxon>
        <taxon>Roseiflexaceae</taxon>
        <taxon>Roseiflexus</taxon>
    </lineage>
</organism>
<proteinExistence type="inferred from homology"/>
<accession>A5UZF9</accession>
<name>AROA_ROSS1</name>
<feature type="chain" id="PRO_0000325379" description="3-phosphoshikimate 1-carboxyvinyltransferase">
    <location>
        <begin position="1"/>
        <end position="433"/>
    </location>
</feature>
<feature type="active site" description="Proton acceptor" evidence="1">
    <location>
        <position position="319"/>
    </location>
</feature>
<feature type="binding site" evidence="1">
    <location>
        <position position="22"/>
    </location>
    <ligand>
        <name>3-phosphoshikimate</name>
        <dbReference type="ChEBI" id="CHEBI:145989"/>
    </ligand>
</feature>
<feature type="binding site" evidence="1">
    <location>
        <position position="22"/>
    </location>
    <ligand>
        <name>phosphoenolpyruvate</name>
        <dbReference type="ChEBI" id="CHEBI:58702"/>
    </ligand>
</feature>
<feature type="binding site" evidence="1">
    <location>
        <position position="23"/>
    </location>
    <ligand>
        <name>3-phosphoshikimate</name>
        <dbReference type="ChEBI" id="CHEBI:145989"/>
    </ligand>
</feature>
<feature type="binding site" evidence="1">
    <location>
        <position position="27"/>
    </location>
    <ligand>
        <name>3-phosphoshikimate</name>
        <dbReference type="ChEBI" id="CHEBI:145989"/>
    </ligand>
</feature>
<feature type="binding site" evidence="1">
    <location>
        <position position="94"/>
    </location>
    <ligand>
        <name>phosphoenolpyruvate</name>
        <dbReference type="ChEBI" id="CHEBI:58702"/>
    </ligand>
</feature>
<feature type="binding site" evidence="1">
    <location>
        <position position="123"/>
    </location>
    <ligand>
        <name>phosphoenolpyruvate</name>
        <dbReference type="ChEBI" id="CHEBI:58702"/>
    </ligand>
</feature>
<feature type="binding site" evidence="1">
    <location>
        <position position="168"/>
    </location>
    <ligand>
        <name>3-phosphoshikimate</name>
        <dbReference type="ChEBI" id="CHEBI:145989"/>
    </ligand>
</feature>
<feature type="binding site" evidence="1">
    <location>
        <position position="170"/>
    </location>
    <ligand>
        <name>3-phosphoshikimate</name>
        <dbReference type="ChEBI" id="CHEBI:145989"/>
    </ligand>
</feature>
<feature type="binding site" evidence="1">
    <location>
        <position position="170"/>
    </location>
    <ligand>
        <name>phosphoenolpyruvate</name>
        <dbReference type="ChEBI" id="CHEBI:58702"/>
    </ligand>
</feature>
<feature type="binding site" evidence="1">
    <location>
        <position position="319"/>
    </location>
    <ligand>
        <name>3-phosphoshikimate</name>
        <dbReference type="ChEBI" id="CHEBI:145989"/>
    </ligand>
</feature>
<feature type="binding site" evidence="1">
    <location>
        <position position="346"/>
    </location>
    <ligand>
        <name>3-phosphoshikimate</name>
        <dbReference type="ChEBI" id="CHEBI:145989"/>
    </ligand>
</feature>
<feature type="binding site" evidence="1">
    <location>
        <position position="350"/>
    </location>
    <ligand>
        <name>phosphoenolpyruvate</name>
        <dbReference type="ChEBI" id="CHEBI:58702"/>
    </ligand>
</feature>
<feature type="binding site" evidence="1">
    <location>
        <position position="392"/>
    </location>
    <ligand>
        <name>phosphoenolpyruvate</name>
        <dbReference type="ChEBI" id="CHEBI:58702"/>
    </ligand>
</feature>
<sequence>MMIYSITPPHRLRGIIDLPGDKSISHRAILLNAVAAGSAEITNFLTGADCLSTIACVQALGVHIERQGTTVRVDGAGLRGLREPVDVLDCGNSGTTLRLLAGMIAGQEGMFAVLTGDSSLRSRPQQRIVAPLRALGASLDGRQQGNCAPLAVRGAHLHGGAYELPIASAQVKSALLLAALFGDAPLTLTGRTDGRDHTERMLAAMGVEITVNTPVIRLTPPAHSDALRPLSLRAPGDPSSAAFWWVAAAIHPDAELTTTGVCLNPTRTGALDALRAMGAQIEVTNQRIEGSEPVGDVTVRSSQLRGITIEGALIPRLIDELPVLALAAACAEGETIIRDAQELRVKETDRIATAASGLTALGATVEPTSDGMVISGGARLRGASLDSHGDHRLAMTWAIAGLVASGETTLRGAGAVDVSYPEFWGVLARVAER</sequence>